<sequence length="254" mass="27511">MAAAKRIADEPAFVLHSYDWSESSLILEVFCRHQGRVALVAKGAKKPSSNFRPVLLPLQPLWLSYALAADGNADIHTLKGAEWVGGHVMPTGDALLSGLYLNELLLRLLARSDPHAALFDAYTGVVRVLASEHGDALEPVLRSFELLLLRAIGLLPSLAAQTMTLAPLQADTRYTLVPEGGLRAAAAAERAALPGHQWQVLQHALDDAASHQATVRACAPVCAELKPQLRTLLQYHCGSPMLRTRQLMIDLQAL</sequence>
<evidence type="ECO:0000255" key="1">
    <source>
        <dbReference type="HAMAP-Rule" id="MF_00201"/>
    </source>
</evidence>
<dbReference type="EMBL" id="CP000542">
    <property type="protein sequence ID" value="ABM58090.1"/>
    <property type="molecule type" value="Genomic_DNA"/>
</dbReference>
<dbReference type="RefSeq" id="WP_011810093.1">
    <property type="nucleotide sequence ID" value="NC_008786.1"/>
</dbReference>
<dbReference type="SMR" id="A1WKD3"/>
<dbReference type="STRING" id="391735.Veis_2343"/>
<dbReference type="GeneID" id="76460906"/>
<dbReference type="KEGG" id="vei:Veis_2343"/>
<dbReference type="eggNOG" id="COG1381">
    <property type="taxonomic scope" value="Bacteria"/>
</dbReference>
<dbReference type="HOGENOM" id="CLU_066645_0_0_4"/>
<dbReference type="OrthoDB" id="9804792at2"/>
<dbReference type="Proteomes" id="UP000000374">
    <property type="component" value="Chromosome"/>
</dbReference>
<dbReference type="GO" id="GO:0043590">
    <property type="term" value="C:bacterial nucleoid"/>
    <property type="evidence" value="ECO:0007669"/>
    <property type="project" value="TreeGrafter"/>
</dbReference>
<dbReference type="GO" id="GO:0006310">
    <property type="term" value="P:DNA recombination"/>
    <property type="evidence" value="ECO:0007669"/>
    <property type="project" value="UniProtKB-UniRule"/>
</dbReference>
<dbReference type="GO" id="GO:0006302">
    <property type="term" value="P:double-strand break repair"/>
    <property type="evidence" value="ECO:0007669"/>
    <property type="project" value="TreeGrafter"/>
</dbReference>
<dbReference type="Gene3D" id="2.40.50.140">
    <property type="entry name" value="Nucleic acid-binding proteins"/>
    <property type="match status" value="1"/>
</dbReference>
<dbReference type="Gene3D" id="1.20.1440.120">
    <property type="entry name" value="Recombination protein O, C-terminal domain"/>
    <property type="match status" value="1"/>
</dbReference>
<dbReference type="HAMAP" id="MF_00201">
    <property type="entry name" value="RecO"/>
    <property type="match status" value="1"/>
</dbReference>
<dbReference type="InterPro" id="IPR037278">
    <property type="entry name" value="ARFGAP/RecO"/>
</dbReference>
<dbReference type="InterPro" id="IPR022572">
    <property type="entry name" value="DNA_rep/recomb_RecO_N"/>
</dbReference>
<dbReference type="InterPro" id="IPR012340">
    <property type="entry name" value="NA-bd_OB-fold"/>
</dbReference>
<dbReference type="InterPro" id="IPR003717">
    <property type="entry name" value="RecO"/>
</dbReference>
<dbReference type="InterPro" id="IPR042242">
    <property type="entry name" value="RecO_C"/>
</dbReference>
<dbReference type="NCBIfam" id="TIGR00613">
    <property type="entry name" value="reco"/>
    <property type="match status" value="1"/>
</dbReference>
<dbReference type="PANTHER" id="PTHR33991">
    <property type="entry name" value="DNA REPAIR PROTEIN RECO"/>
    <property type="match status" value="1"/>
</dbReference>
<dbReference type="PANTHER" id="PTHR33991:SF1">
    <property type="entry name" value="DNA REPAIR PROTEIN RECO"/>
    <property type="match status" value="1"/>
</dbReference>
<dbReference type="Pfam" id="PF02565">
    <property type="entry name" value="RecO_C"/>
    <property type="match status" value="1"/>
</dbReference>
<dbReference type="Pfam" id="PF11967">
    <property type="entry name" value="RecO_N"/>
    <property type="match status" value="1"/>
</dbReference>
<dbReference type="SUPFAM" id="SSF57863">
    <property type="entry name" value="ArfGap/RecO-like zinc finger"/>
    <property type="match status" value="1"/>
</dbReference>
<dbReference type="SUPFAM" id="SSF50249">
    <property type="entry name" value="Nucleic acid-binding proteins"/>
    <property type="match status" value="1"/>
</dbReference>
<name>RECO_VEREI</name>
<keyword id="KW-0227">DNA damage</keyword>
<keyword id="KW-0233">DNA recombination</keyword>
<keyword id="KW-0234">DNA repair</keyword>
<keyword id="KW-1185">Reference proteome</keyword>
<organism>
    <name type="scientific">Verminephrobacter eiseniae (strain EF01-2)</name>
    <dbReference type="NCBI Taxonomy" id="391735"/>
    <lineage>
        <taxon>Bacteria</taxon>
        <taxon>Pseudomonadati</taxon>
        <taxon>Pseudomonadota</taxon>
        <taxon>Betaproteobacteria</taxon>
        <taxon>Burkholderiales</taxon>
        <taxon>Comamonadaceae</taxon>
        <taxon>Verminephrobacter</taxon>
    </lineage>
</organism>
<accession>A1WKD3</accession>
<proteinExistence type="inferred from homology"/>
<feature type="chain" id="PRO_0000325211" description="DNA repair protein RecO">
    <location>
        <begin position="1"/>
        <end position="254"/>
    </location>
</feature>
<gene>
    <name evidence="1" type="primary">recO</name>
    <name type="ordered locus">Veis_2343</name>
</gene>
<protein>
    <recommendedName>
        <fullName evidence="1">DNA repair protein RecO</fullName>
    </recommendedName>
    <alternativeName>
        <fullName evidence="1">Recombination protein O</fullName>
    </alternativeName>
</protein>
<comment type="function">
    <text evidence="1">Involved in DNA repair and RecF pathway recombination.</text>
</comment>
<comment type="similarity">
    <text evidence="1">Belongs to the RecO family.</text>
</comment>
<reference key="1">
    <citation type="submission" date="2006-12" db="EMBL/GenBank/DDBJ databases">
        <title>Complete sequence of chromosome 1 of Verminephrobacter eiseniae EF01-2.</title>
        <authorList>
            <person name="Copeland A."/>
            <person name="Lucas S."/>
            <person name="Lapidus A."/>
            <person name="Barry K."/>
            <person name="Detter J.C."/>
            <person name="Glavina del Rio T."/>
            <person name="Dalin E."/>
            <person name="Tice H."/>
            <person name="Pitluck S."/>
            <person name="Chertkov O."/>
            <person name="Brettin T."/>
            <person name="Bruce D."/>
            <person name="Han C."/>
            <person name="Tapia R."/>
            <person name="Gilna P."/>
            <person name="Schmutz J."/>
            <person name="Larimer F."/>
            <person name="Land M."/>
            <person name="Hauser L."/>
            <person name="Kyrpides N."/>
            <person name="Kim E."/>
            <person name="Stahl D."/>
            <person name="Richardson P."/>
        </authorList>
    </citation>
    <scope>NUCLEOTIDE SEQUENCE [LARGE SCALE GENOMIC DNA]</scope>
    <source>
        <strain>EF01-2</strain>
    </source>
</reference>